<accession>Q8DC63</accession>
<reference key="1">
    <citation type="submission" date="2002-12" db="EMBL/GenBank/DDBJ databases">
        <title>Complete genome sequence of Vibrio vulnificus CMCP6.</title>
        <authorList>
            <person name="Rhee J.H."/>
            <person name="Kim S.Y."/>
            <person name="Chung S.S."/>
            <person name="Kim J.J."/>
            <person name="Moon Y.H."/>
            <person name="Jeong H."/>
            <person name="Choy H.E."/>
        </authorList>
    </citation>
    <scope>NUCLEOTIDE SEQUENCE [LARGE SCALE GENOMIC DNA]</scope>
    <source>
        <strain>CMCP6</strain>
    </source>
</reference>
<name>PYRG_VIBVU</name>
<feature type="chain" id="PRO_0000138248" description="CTP synthase">
    <location>
        <begin position="1"/>
        <end position="545"/>
    </location>
</feature>
<feature type="domain" description="Glutamine amidotransferase type-1" evidence="1">
    <location>
        <begin position="291"/>
        <end position="542"/>
    </location>
</feature>
<feature type="region of interest" description="Amidoligase domain" evidence="1">
    <location>
        <begin position="1"/>
        <end position="266"/>
    </location>
</feature>
<feature type="active site" description="Nucleophile; for glutamine hydrolysis" evidence="1">
    <location>
        <position position="379"/>
    </location>
</feature>
<feature type="active site" evidence="1">
    <location>
        <position position="515"/>
    </location>
</feature>
<feature type="active site" evidence="1">
    <location>
        <position position="517"/>
    </location>
</feature>
<feature type="binding site" evidence="1">
    <location>
        <position position="14"/>
    </location>
    <ligand>
        <name>CTP</name>
        <dbReference type="ChEBI" id="CHEBI:37563"/>
        <note>allosteric inhibitor</note>
    </ligand>
</feature>
<feature type="binding site" evidence="1">
    <location>
        <position position="14"/>
    </location>
    <ligand>
        <name>UTP</name>
        <dbReference type="ChEBI" id="CHEBI:46398"/>
    </ligand>
</feature>
<feature type="binding site" evidence="1">
    <location>
        <begin position="15"/>
        <end position="20"/>
    </location>
    <ligand>
        <name>ATP</name>
        <dbReference type="ChEBI" id="CHEBI:30616"/>
    </ligand>
</feature>
<feature type="binding site" evidence="1">
    <location>
        <position position="72"/>
    </location>
    <ligand>
        <name>ATP</name>
        <dbReference type="ChEBI" id="CHEBI:30616"/>
    </ligand>
</feature>
<feature type="binding site" evidence="1">
    <location>
        <position position="72"/>
    </location>
    <ligand>
        <name>Mg(2+)</name>
        <dbReference type="ChEBI" id="CHEBI:18420"/>
    </ligand>
</feature>
<feature type="binding site" evidence="1">
    <location>
        <position position="140"/>
    </location>
    <ligand>
        <name>Mg(2+)</name>
        <dbReference type="ChEBI" id="CHEBI:18420"/>
    </ligand>
</feature>
<feature type="binding site" evidence="1">
    <location>
        <begin position="147"/>
        <end position="149"/>
    </location>
    <ligand>
        <name>CTP</name>
        <dbReference type="ChEBI" id="CHEBI:37563"/>
        <note>allosteric inhibitor</note>
    </ligand>
</feature>
<feature type="binding site" evidence="1">
    <location>
        <begin position="187"/>
        <end position="192"/>
    </location>
    <ligand>
        <name>CTP</name>
        <dbReference type="ChEBI" id="CHEBI:37563"/>
        <note>allosteric inhibitor</note>
    </ligand>
</feature>
<feature type="binding site" evidence="1">
    <location>
        <begin position="187"/>
        <end position="192"/>
    </location>
    <ligand>
        <name>UTP</name>
        <dbReference type="ChEBI" id="CHEBI:46398"/>
    </ligand>
</feature>
<feature type="binding site" evidence="1">
    <location>
        <position position="223"/>
    </location>
    <ligand>
        <name>CTP</name>
        <dbReference type="ChEBI" id="CHEBI:37563"/>
        <note>allosteric inhibitor</note>
    </ligand>
</feature>
<feature type="binding site" evidence="1">
    <location>
        <position position="223"/>
    </location>
    <ligand>
        <name>UTP</name>
        <dbReference type="ChEBI" id="CHEBI:46398"/>
    </ligand>
</feature>
<feature type="binding site" evidence="1">
    <location>
        <begin position="239"/>
        <end position="241"/>
    </location>
    <ligand>
        <name>ATP</name>
        <dbReference type="ChEBI" id="CHEBI:30616"/>
    </ligand>
</feature>
<feature type="binding site" evidence="1">
    <location>
        <position position="352"/>
    </location>
    <ligand>
        <name>L-glutamine</name>
        <dbReference type="ChEBI" id="CHEBI:58359"/>
    </ligand>
</feature>
<feature type="binding site" evidence="1">
    <location>
        <begin position="380"/>
        <end position="383"/>
    </location>
    <ligand>
        <name>L-glutamine</name>
        <dbReference type="ChEBI" id="CHEBI:58359"/>
    </ligand>
</feature>
<feature type="binding site" evidence="1">
    <location>
        <position position="403"/>
    </location>
    <ligand>
        <name>L-glutamine</name>
        <dbReference type="ChEBI" id="CHEBI:58359"/>
    </ligand>
</feature>
<feature type="binding site" evidence="1">
    <location>
        <position position="470"/>
    </location>
    <ligand>
        <name>L-glutamine</name>
        <dbReference type="ChEBI" id="CHEBI:58359"/>
    </ligand>
</feature>
<dbReference type="EC" id="6.3.4.2" evidence="1"/>
<dbReference type="EMBL" id="AE016795">
    <property type="protein sequence ID" value="AAO10002.1"/>
    <property type="molecule type" value="Genomic_DNA"/>
</dbReference>
<dbReference type="RefSeq" id="WP_011079512.1">
    <property type="nucleotide sequence ID" value="NC_004459.3"/>
</dbReference>
<dbReference type="SMR" id="Q8DC63"/>
<dbReference type="KEGG" id="vvu:VV1_1578"/>
<dbReference type="HOGENOM" id="CLU_011675_5_0_6"/>
<dbReference type="UniPathway" id="UPA00159">
    <property type="reaction ID" value="UER00277"/>
</dbReference>
<dbReference type="Proteomes" id="UP000002275">
    <property type="component" value="Chromosome 1"/>
</dbReference>
<dbReference type="GO" id="GO:0005829">
    <property type="term" value="C:cytosol"/>
    <property type="evidence" value="ECO:0007669"/>
    <property type="project" value="TreeGrafter"/>
</dbReference>
<dbReference type="GO" id="GO:0005524">
    <property type="term" value="F:ATP binding"/>
    <property type="evidence" value="ECO:0007669"/>
    <property type="project" value="UniProtKB-KW"/>
</dbReference>
<dbReference type="GO" id="GO:0003883">
    <property type="term" value="F:CTP synthase activity"/>
    <property type="evidence" value="ECO:0007669"/>
    <property type="project" value="UniProtKB-UniRule"/>
</dbReference>
<dbReference type="GO" id="GO:0004359">
    <property type="term" value="F:glutaminase activity"/>
    <property type="evidence" value="ECO:0007669"/>
    <property type="project" value="RHEA"/>
</dbReference>
<dbReference type="GO" id="GO:0042802">
    <property type="term" value="F:identical protein binding"/>
    <property type="evidence" value="ECO:0007669"/>
    <property type="project" value="TreeGrafter"/>
</dbReference>
<dbReference type="GO" id="GO:0046872">
    <property type="term" value="F:metal ion binding"/>
    <property type="evidence" value="ECO:0007669"/>
    <property type="project" value="UniProtKB-KW"/>
</dbReference>
<dbReference type="GO" id="GO:0044210">
    <property type="term" value="P:'de novo' CTP biosynthetic process"/>
    <property type="evidence" value="ECO:0007669"/>
    <property type="project" value="UniProtKB-UniRule"/>
</dbReference>
<dbReference type="GO" id="GO:0019856">
    <property type="term" value="P:pyrimidine nucleobase biosynthetic process"/>
    <property type="evidence" value="ECO:0007669"/>
    <property type="project" value="TreeGrafter"/>
</dbReference>
<dbReference type="CDD" id="cd03113">
    <property type="entry name" value="CTPS_N"/>
    <property type="match status" value="1"/>
</dbReference>
<dbReference type="CDD" id="cd01746">
    <property type="entry name" value="GATase1_CTP_Synthase"/>
    <property type="match status" value="1"/>
</dbReference>
<dbReference type="FunFam" id="3.40.50.300:FF:000009">
    <property type="entry name" value="CTP synthase"/>
    <property type="match status" value="1"/>
</dbReference>
<dbReference type="FunFam" id="3.40.50.880:FF:000002">
    <property type="entry name" value="CTP synthase"/>
    <property type="match status" value="1"/>
</dbReference>
<dbReference type="Gene3D" id="3.40.50.880">
    <property type="match status" value="1"/>
</dbReference>
<dbReference type="Gene3D" id="3.40.50.300">
    <property type="entry name" value="P-loop containing nucleotide triphosphate hydrolases"/>
    <property type="match status" value="1"/>
</dbReference>
<dbReference type="HAMAP" id="MF_01227">
    <property type="entry name" value="PyrG"/>
    <property type="match status" value="1"/>
</dbReference>
<dbReference type="InterPro" id="IPR029062">
    <property type="entry name" value="Class_I_gatase-like"/>
</dbReference>
<dbReference type="InterPro" id="IPR004468">
    <property type="entry name" value="CTP_synthase"/>
</dbReference>
<dbReference type="InterPro" id="IPR017456">
    <property type="entry name" value="CTP_synthase_N"/>
</dbReference>
<dbReference type="InterPro" id="IPR017926">
    <property type="entry name" value="GATASE"/>
</dbReference>
<dbReference type="InterPro" id="IPR033828">
    <property type="entry name" value="GATase1_CTP_Synthase"/>
</dbReference>
<dbReference type="InterPro" id="IPR027417">
    <property type="entry name" value="P-loop_NTPase"/>
</dbReference>
<dbReference type="NCBIfam" id="NF003792">
    <property type="entry name" value="PRK05380.1"/>
    <property type="match status" value="1"/>
</dbReference>
<dbReference type="NCBIfam" id="TIGR00337">
    <property type="entry name" value="PyrG"/>
    <property type="match status" value="1"/>
</dbReference>
<dbReference type="PANTHER" id="PTHR11550">
    <property type="entry name" value="CTP SYNTHASE"/>
    <property type="match status" value="1"/>
</dbReference>
<dbReference type="PANTHER" id="PTHR11550:SF0">
    <property type="entry name" value="CTP SYNTHASE-RELATED"/>
    <property type="match status" value="1"/>
</dbReference>
<dbReference type="Pfam" id="PF06418">
    <property type="entry name" value="CTP_synth_N"/>
    <property type="match status" value="1"/>
</dbReference>
<dbReference type="Pfam" id="PF00117">
    <property type="entry name" value="GATase"/>
    <property type="match status" value="1"/>
</dbReference>
<dbReference type="SUPFAM" id="SSF52317">
    <property type="entry name" value="Class I glutamine amidotransferase-like"/>
    <property type="match status" value="1"/>
</dbReference>
<dbReference type="SUPFAM" id="SSF52540">
    <property type="entry name" value="P-loop containing nucleoside triphosphate hydrolases"/>
    <property type="match status" value="1"/>
</dbReference>
<dbReference type="PROSITE" id="PS51273">
    <property type="entry name" value="GATASE_TYPE_1"/>
    <property type="match status" value="1"/>
</dbReference>
<protein>
    <recommendedName>
        <fullName evidence="1">CTP synthase</fullName>
        <ecNumber evidence="1">6.3.4.2</ecNumber>
    </recommendedName>
    <alternativeName>
        <fullName evidence="1">Cytidine 5'-triphosphate synthase</fullName>
    </alternativeName>
    <alternativeName>
        <fullName evidence="1">Cytidine triphosphate synthetase</fullName>
        <shortName evidence="1">CTP synthetase</shortName>
        <shortName evidence="1">CTPS</shortName>
    </alternativeName>
    <alternativeName>
        <fullName evidence="1">UTP--ammonia ligase</fullName>
    </alternativeName>
</protein>
<organism>
    <name type="scientific">Vibrio vulnificus (strain CMCP6)</name>
    <dbReference type="NCBI Taxonomy" id="216895"/>
    <lineage>
        <taxon>Bacteria</taxon>
        <taxon>Pseudomonadati</taxon>
        <taxon>Pseudomonadota</taxon>
        <taxon>Gammaproteobacteria</taxon>
        <taxon>Vibrionales</taxon>
        <taxon>Vibrionaceae</taxon>
        <taxon>Vibrio</taxon>
    </lineage>
</organism>
<gene>
    <name evidence="1" type="primary">pyrG</name>
    <name type="ordered locus">VV1_1578</name>
</gene>
<comment type="function">
    <text evidence="1">Catalyzes the ATP-dependent amination of UTP to CTP with either L-glutamine or ammonia as the source of nitrogen. Regulates intracellular CTP levels through interactions with the four ribonucleotide triphosphates.</text>
</comment>
<comment type="catalytic activity">
    <reaction evidence="1">
        <text>UTP + L-glutamine + ATP + H2O = CTP + L-glutamate + ADP + phosphate + 2 H(+)</text>
        <dbReference type="Rhea" id="RHEA:26426"/>
        <dbReference type="ChEBI" id="CHEBI:15377"/>
        <dbReference type="ChEBI" id="CHEBI:15378"/>
        <dbReference type="ChEBI" id="CHEBI:29985"/>
        <dbReference type="ChEBI" id="CHEBI:30616"/>
        <dbReference type="ChEBI" id="CHEBI:37563"/>
        <dbReference type="ChEBI" id="CHEBI:43474"/>
        <dbReference type="ChEBI" id="CHEBI:46398"/>
        <dbReference type="ChEBI" id="CHEBI:58359"/>
        <dbReference type="ChEBI" id="CHEBI:456216"/>
        <dbReference type="EC" id="6.3.4.2"/>
    </reaction>
</comment>
<comment type="catalytic activity">
    <reaction evidence="1">
        <text>L-glutamine + H2O = L-glutamate + NH4(+)</text>
        <dbReference type="Rhea" id="RHEA:15889"/>
        <dbReference type="ChEBI" id="CHEBI:15377"/>
        <dbReference type="ChEBI" id="CHEBI:28938"/>
        <dbReference type="ChEBI" id="CHEBI:29985"/>
        <dbReference type="ChEBI" id="CHEBI:58359"/>
    </reaction>
</comment>
<comment type="catalytic activity">
    <reaction evidence="1">
        <text>UTP + NH4(+) + ATP = CTP + ADP + phosphate + 2 H(+)</text>
        <dbReference type="Rhea" id="RHEA:16597"/>
        <dbReference type="ChEBI" id="CHEBI:15378"/>
        <dbReference type="ChEBI" id="CHEBI:28938"/>
        <dbReference type="ChEBI" id="CHEBI:30616"/>
        <dbReference type="ChEBI" id="CHEBI:37563"/>
        <dbReference type="ChEBI" id="CHEBI:43474"/>
        <dbReference type="ChEBI" id="CHEBI:46398"/>
        <dbReference type="ChEBI" id="CHEBI:456216"/>
    </reaction>
</comment>
<comment type="activity regulation">
    <text evidence="1">Allosterically activated by GTP, when glutamine is the substrate; GTP has no effect on the reaction when ammonia is the substrate. The allosteric effector GTP functions by stabilizing the protein conformation that binds the tetrahedral intermediate(s) formed during glutamine hydrolysis. Inhibited by the product CTP, via allosteric rather than competitive inhibition.</text>
</comment>
<comment type="pathway">
    <text evidence="1">Pyrimidine metabolism; CTP biosynthesis via de novo pathway; CTP from UDP: step 2/2.</text>
</comment>
<comment type="subunit">
    <text evidence="1">Homotetramer.</text>
</comment>
<comment type="miscellaneous">
    <text evidence="1">CTPSs have evolved a hybrid strategy for distinguishing between UTP and CTP. The overlapping regions of the product feedback inhibitory and substrate sites recognize a common feature in both compounds, the triphosphate moiety. To differentiate isosteric substrate and product pyrimidine rings, an additional pocket far from the expected kinase/ligase catalytic site, specifically recognizes the cytosine and ribose portions of the product inhibitor.</text>
</comment>
<comment type="similarity">
    <text evidence="1">Belongs to the CTP synthase family.</text>
</comment>
<sequence>MTTNYIFVTGGVVSSLGKGIAAASLAAILEARGLKVTMMKLDPYINVDPGTMSPTQHGEVFVTEDGAETDLDLGHYERFIRTKMTKRNNFTAGRVYSDVLAKERRGDYLGATIQVIPHITNDIKDRVINGSQGHDVAIVEVGGTVGDIESLPFMEAIRQLAVEIGRERAMFMHLTLVPYLAAAGEVKTKPTQHSVKELLSIGIQPDILVCRSDRMIPANERKKIALFCNVPEKAVISMKDVDSIYKIPQLIKSQGLDDLVCARFGINAPEADLSEWEQVIYEEANPTGEVTIGMVGKYIELPDAYKSVNEALKHAGLKNRLSVNIKYVDSQDVETKGVEVLQGLDAILVPGGFGDRGIEGKILAAKYARENKVPYLGICLGMQVALIEYARNVAGMEGAHSTEFNKDTKYPVVGLITEWVDSEGNVEERTESSNLGGTMRLGSQLCHLAKGTKARELYGSDTIHERHRHRYEVNNNLRPQIEKAGLKVSGLSADKKLVEMIENPNHPWFVAAQFHPEFTSTPRDGHPLFSGFIKAAGENARGELK</sequence>
<keyword id="KW-0067">ATP-binding</keyword>
<keyword id="KW-0315">Glutamine amidotransferase</keyword>
<keyword id="KW-0436">Ligase</keyword>
<keyword id="KW-0460">Magnesium</keyword>
<keyword id="KW-0479">Metal-binding</keyword>
<keyword id="KW-0547">Nucleotide-binding</keyword>
<keyword id="KW-0665">Pyrimidine biosynthesis</keyword>
<evidence type="ECO:0000255" key="1">
    <source>
        <dbReference type="HAMAP-Rule" id="MF_01227"/>
    </source>
</evidence>
<proteinExistence type="inferred from homology"/>